<protein>
    <recommendedName>
        <fullName evidence="1">ATP synthase subunit c</fullName>
    </recommendedName>
    <alternativeName>
        <fullName evidence="1">ATP synthase F(0) sector subunit c</fullName>
    </alternativeName>
    <alternativeName>
        <fullName evidence="1">F-type ATPase subunit c</fullName>
        <shortName evidence="1">F-ATPase subunit c</shortName>
    </alternativeName>
    <alternativeName>
        <fullName evidence="1">Lipid-binding protein</fullName>
    </alternativeName>
</protein>
<evidence type="ECO:0000255" key="1">
    <source>
        <dbReference type="HAMAP-Rule" id="MF_01396"/>
    </source>
</evidence>
<proteinExistence type="inferred from homology"/>
<comment type="function">
    <text evidence="1">F(1)F(0) ATP synthase produces ATP from ADP in the presence of a proton or sodium gradient. F-type ATPases consist of two structural domains, F(1) containing the extramembraneous catalytic core and F(0) containing the membrane proton channel, linked together by a central stalk and a peripheral stalk. During catalysis, ATP synthesis in the catalytic domain of F(1) is coupled via a rotary mechanism of the central stalk subunits to proton translocation.</text>
</comment>
<comment type="function">
    <text evidence="1">Key component of the F(0) channel; it plays a direct role in translocation across the membrane. A homomeric c-ring of between 10-14 subunits forms the central stalk rotor element with the F(1) delta and epsilon subunits.</text>
</comment>
<comment type="subunit">
    <text evidence="1">F-type ATPases have 2 components, F(1) - the catalytic core - and F(0) - the membrane proton channel. F(1) has five subunits: alpha(3), beta(3), gamma(1), delta(1), epsilon(1). F(0) has three main subunits: a(1), b(2) and c(10-14). The alpha and beta chains form an alternating ring which encloses part of the gamma chain. F(1) is attached to F(0) by a central stalk formed by the gamma and epsilon chains, while a peripheral stalk is formed by the delta and b chains.</text>
</comment>
<comment type="subcellular location">
    <subcellularLocation>
        <location evidence="1">Cell inner membrane</location>
        <topology evidence="1">Multi-pass membrane protein</topology>
    </subcellularLocation>
</comment>
<comment type="similarity">
    <text evidence="1">Belongs to the ATPase C chain family.</text>
</comment>
<dbReference type="EMBL" id="CP000681">
    <property type="protein sequence ID" value="ABP77666.1"/>
    <property type="molecule type" value="Genomic_DNA"/>
</dbReference>
<dbReference type="SMR" id="A4YCI3"/>
<dbReference type="STRING" id="319224.Sputcn32_3961"/>
<dbReference type="KEGG" id="spc:Sputcn32_3961"/>
<dbReference type="eggNOG" id="ENOG5032S3K">
    <property type="taxonomic scope" value="Bacteria"/>
</dbReference>
<dbReference type="HOGENOM" id="CLU_148047_1_0_6"/>
<dbReference type="GO" id="GO:0005886">
    <property type="term" value="C:plasma membrane"/>
    <property type="evidence" value="ECO:0007669"/>
    <property type="project" value="UniProtKB-SubCell"/>
</dbReference>
<dbReference type="GO" id="GO:0045259">
    <property type="term" value="C:proton-transporting ATP synthase complex"/>
    <property type="evidence" value="ECO:0007669"/>
    <property type="project" value="UniProtKB-KW"/>
</dbReference>
<dbReference type="GO" id="GO:0033177">
    <property type="term" value="C:proton-transporting two-sector ATPase complex, proton-transporting domain"/>
    <property type="evidence" value="ECO:0007669"/>
    <property type="project" value="InterPro"/>
</dbReference>
<dbReference type="GO" id="GO:0008289">
    <property type="term" value="F:lipid binding"/>
    <property type="evidence" value="ECO:0007669"/>
    <property type="project" value="UniProtKB-KW"/>
</dbReference>
<dbReference type="GO" id="GO:0046933">
    <property type="term" value="F:proton-transporting ATP synthase activity, rotational mechanism"/>
    <property type="evidence" value="ECO:0007669"/>
    <property type="project" value="UniProtKB-UniRule"/>
</dbReference>
<dbReference type="CDD" id="cd18185">
    <property type="entry name" value="ATP-synt_Fo_c_ATPE"/>
    <property type="match status" value="1"/>
</dbReference>
<dbReference type="FunFam" id="1.20.20.10:FF:000002">
    <property type="entry name" value="ATP synthase subunit c"/>
    <property type="match status" value="1"/>
</dbReference>
<dbReference type="Gene3D" id="1.20.20.10">
    <property type="entry name" value="F1F0 ATP synthase subunit C"/>
    <property type="match status" value="1"/>
</dbReference>
<dbReference type="HAMAP" id="MF_01396">
    <property type="entry name" value="ATP_synth_c_bact"/>
    <property type="match status" value="1"/>
</dbReference>
<dbReference type="InterPro" id="IPR005953">
    <property type="entry name" value="ATP_synth_csu_bac/chlpt"/>
</dbReference>
<dbReference type="InterPro" id="IPR000454">
    <property type="entry name" value="ATP_synth_F0_csu"/>
</dbReference>
<dbReference type="InterPro" id="IPR020537">
    <property type="entry name" value="ATP_synth_F0_csu_DDCD_BS"/>
</dbReference>
<dbReference type="InterPro" id="IPR038662">
    <property type="entry name" value="ATP_synth_F0_csu_sf"/>
</dbReference>
<dbReference type="InterPro" id="IPR002379">
    <property type="entry name" value="ATPase_proteolipid_c-like_dom"/>
</dbReference>
<dbReference type="InterPro" id="IPR035921">
    <property type="entry name" value="F/V-ATP_Csub_sf"/>
</dbReference>
<dbReference type="NCBIfam" id="TIGR01260">
    <property type="entry name" value="ATP_synt_c"/>
    <property type="match status" value="1"/>
</dbReference>
<dbReference type="NCBIfam" id="NF005363">
    <property type="entry name" value="PRK06876.1"/>
    <property type="match status" value="1"/>
</dbReference>
<dbReference type="Pfam" id="PF00137">
    <property type="entry name" value="ATP-synt_C"/>
    <property type="match status" value="1"/>
</dbReference>
<dbReference type="PRINTS" id="PR00124">
    <property type="entry name" value="ATPASEC"/>
</dbReference>
<dbReference type="SUPFAM" id="SSF81333">
    <property type="entry name" value="F1F0 ATP synthase subunit C"/>
    <property type="match status" value="1"/>
</dbReference>
<dbReference type="PROSITE" id="PS00605">
    <property type="entry name" value="ATPASE_C"/>
    <property type="match status" value="1"/>
</dbReference>
<feature type="chain" id="PRO_1000184477" description="ATP synthase subunit c">
    <location>
        <begin position="1"/>
        <end position="84"/>
    </location>
</feature>
<feature type="transmembrane region" description="Helical" evidence="1">
    <location>
        <begin position="10"/>
        <end position="30"/>
    </location>
</feature>
<feature type="transmembrane region" description="Helical" evidence="1">
    <location>
        <begin position="53"/>
        <end position="73"/>
    </location>
</feature>
<feature type="site" description="Reversibly protonated during proton transport" evidence="1">
    <location>
        <position position="60"/>
    </location>
</feature>
<name>ATPL_SHEPC</name>
<accession>A4YCI3</accession>
<reference key="1">
    <citation type="submission" date="2007-04" db="EMBL/GenBank/DDBJ databases">
        <title>Complete sequence of Shewanella putrefaciens CN-32.</title>
        <authorList>
            <consortium name="US DOE Joint Genome Institute"/>
            <person name="Copeland A."/>
            <person name="Lucas S."/>
            <person name="Lapidus A."/>
            <person name="Barry K."/>
            <person name="Detter J.C."/>
            <person name="Glavina del Rio T."/>
            <person name="Hammon N."/>
            <person name="Israni S."/>
            <person name="Dalin E."/>
            <person name="Tice H."/>
            <person name="Pitluck S."/>
            <person name="Chain P."/>
            <person name="Malfatti S."/>
            <person name="Shin M."/>
            <person name="Vergez L."/>
            <person name="Schmutz J."/>
            <person name="Larimer F."/>
            <person name="Land M."/>
            <person name="Hauser L."/>
            <person name="Kyrpides N."/>
            <person name="Mikhailova N."/>
            <person name="Romine M.F."/>
            <person name="Fredrickson J."/>
            <person name="Tiedje J."/>
            <person name="Richardson P."/>
        </authorList>
    </citation>
    <scope>NUCLEOTIDE SEQUENCE [LARGE SCALE GENOMIC DNA]</scope>
    <source>
        <strain>CN-32 / ATCC BAA-453</strain>
    </source>
</reference>
<sequence>METVISFTAIAVAIMIGLAALGTAIGFAILGGKFLEASARQPELAPALQIKMFIVAGLLDAISMIAVGVALFFVFANPFLAQLG</sequence>
<organism>
    <name type="scientific">Shewanella putrefaciens (strain CN-32 / ATCC BAA-453)</name>
    <dbReference type="NCBI Taxonomy" id="319224"/>
    <lineage>
        <taxon>Bacteria</taxon>
        <taxon>Pseudomonadati</taxon>
        <taxon>Pseudomonadota</taxon>
        <taxon>Gammaproteobacteria</taxon>
        <taxon>Alteromonadales</taxon>
        <taxon>Shewanellaceae</taxon>
        <taxon>Shewanella</taxon>
    </lineage>
</organism>
<keyword id="KW-0066">ATP synthesis</keyword>
<keyword id="KW-0997">Cell inner membrane</keyword>
<keyword id="KW-1003">Cell membrane</keyword>
<keyword id="KW-0138">CF(0)</keyword>
<keyword id="KW-0375">Hydrogen ion transport</keyword>
<keyword id="KW-0406">Ion transport</keyword>
<keyword id="KW-0446">Lipid-binding</keyword>
<keyword id="KW-0472">Membrane</keyword>
<keyword id="KW-0812">Transmembrane</keyword>
<keyword id="KW-1133">Transmembrane helix</keyword>
<keyword id="KW-0813">Transport</keyword>
<gene>
    <name evidence="1" type="primary">atpE</name>
    <name type="ordered locus">Sputcn32_3961</name>
</gene>